<name>YZ10_CAEEL</name>
<organism>
    <name type="scientific">Caenorhabditis elegans</name>
    <dbReference type="NCBI Taxonomy" id="6239"/>
    <lineage>
        <taxon>Eukaryota</taxon>
        <taxon>Metazoa</taxon>
        <taxon>Ecdysozoa</taxon>
        <taxon>Nematoda</taxon>
        <taxon>Chromadorea</taxon>
        <taxon>Rhabditida</taxon>
        <taxon>Rhabditina</taxon>
        <taxon>Rhabditomorpha</taxon>
        <taxon>Rhabditoidea</taxon>
        <taxon>Rhabditidae</taxon>
        <taxon>Peloderinae</taxon>
        <taxon>Caenorhabditis</taxon>
    </lineage>
</organism>
<keyword id="KW-1185">Reference proteome</keyword>
<evidence type="ECO:0000256" key="1">
    <source>
        <dbReference type="SAM" id="MobiDB-lite"/>
    </source>
</evidence>
<proteinExistence type="predicted"/>
<protein>
    <recommendedName>
        <fullName>Uncharacterized protein F08B12.4</fullName>
    </recommendedName>
</protein>
<accession>Q19191</accession>
<dbReference type="EMBL" id="Z68104">
    <property type="protein sequence ID" value="CAA92114.2"/>
    <property type="molecule type" value="Genomic_DNA"/>
</dbReference>
<dbReference type="EMBL" id="AF303263">
    <property type="protein sequence ID" value="AAG50221.1"/>
    <property type="molecule type" value="mRNA"/>
</dbReference>
<dbReference type="PIR" id="T20576">
    <property type="entry name" value="T20576"/>
</dbReference>
<dbReference type="RefSeq" id="NP_001257155.1">
    <property type="nucleotide sequence ID" value="NM_001270226.1"/>
</dbReference>
<dbReference type="RefSeq" id="NP_001366743.1">
    <property type="nucleotide sequence ID" value="NM_001381105.1"/>
</dbReference>
<dbReference type="SMR" id="Q19191"/>
<dbReference type="BioGRID" id="46242">
    <property type="interactions" value="1"/>
</dbReference>
<dbReference type="FunCoup" id="Q19191">
    <property type="interactions" value="1483"/>
</dbReference>
<dbReference type="PaxDb" id="6239-F08B12.4a"/>
<dbReference type="PeptideAtlas" id="Q19191"/>
<dbReference type="EnsemblMetazoa" id="F08B12.4b.1">
    <property type="protein sequence ID" value="F08B12.4b.1"/>
    <property type="gene ID" value="WBGene00008572"/>
</dbReference>
<dbReference type="GeneID" id="181333"/>
<dbReference type="UCSC" id="F08B12.4.1">
    <property type="organism name" value="c. elegans"/>
</dbReference>
<dbReference type="AGR" id="WB:WBGene00008572"/>
<dbReference type="WormBase" id="F08B12.4b">
    <property type="protein sequence ID" value="CE26708"/>
    <property type="gene ID" value="WBGene00008572"/>
</dbReference>
<dbReference type="eggNOG" id="ENOG502TI91">
    <property type="taxonomic scope" value="Eukaryota"/>
</dbReference>
<dbReference type="InParanoid" id="Q19191"/>
<dbReference type="PRO" id="PR:Q19191"/>
<dbReference type="Proteomes" id="UP000001940">
    <property type="component" value="Chromosome X"/>
</dbReference>
<dbReference type="Bgee" id="WBGene00008572">
    <property type="expression patterns" value="Expressed in larva and 4 other cell types or tissues"/>
</dbReference>
<dbReference type="ExpressionAtlas" id="Q19191">
    <property type="expression patterns" value="baseline and differential"/>
</dbReference>
<dbReference type="GO" id="GO:0005634">
    <property type="term" value="C:nucleus"/>
    <property type="evidence" value="ECO:0007005"/>
    <property type="project" value="WormBase"/>
</dbReference>
<reference key="1">
    <citation type="journal article" date="1998" name="Science">
        <title>Genome sequence of the nematode C. elegans: a platform for investigating biology.</title>
        <authorList>
            <consortium name="The C. elegans sequencing consortium"/>
        </authorList>
    </citation>
    <scope>NUCLEOTIDE SEQUENCE [LARGE SCALE GENOMIC DNA]</scope>
    <source>
        <strain>Bristol N2</strain>
    </source>
</reference>
<reference key="2">
    <citation type="submission" date="2000-08" db="EMBL/GenBank/DDBJ databases">
        <title>The Caenorhabditis elegans transcriptome project, a complementary view of the genome.</title>
        <authorList>
            <person name="Kohara Y."/>
            <person name="Shin-i T."/>
            <person name="Suzuki Y."/>
            <person name="Sugano S."/>
            <person name="Potdevin M."/>
            <person name="Thierry-Mieg Y."/>
            <person name="Thierry-Mieg D."/>
            <person name="Thierry-Mieg J."/>
        </authorList>
    </citation>
    <scope>NUCLEOTIDE SEQUENCE [LARGE SCALE MRNA]</scope>
    <source>
        <strain>Bristol N2</strain>
    </source>
</reference>
<gene>
    <name type="ORF">F08B12.4</name>
</gene>
<feature type="chain" id="PRO_0000065280" description="Uncharacterized protein F08B12.4">
    <location>
        <begin position="1"/>
        <end position="102"/>
    </location>
</feature>
<feature type="region of interest" description="Disordered" evidence="1">
    <location>
        <begin position="1"/>
        <end position="102"/>
    </location>
</feature>
<sequence>MPVEQDGLTGGRGVPHPNSAAGQALSGKTGGSSVPHPNSAAGQALSGGMTGGSAVPHPNSAAGQELTNKNLEEKSVLEGGTQVKPWLKNQPDLANIREQNHQ</sequence>